<organism>
    <name type="scientific">Borrelia recurrentis (strain A1)</name>
    <dbReference type="NCBI Taxonomy" id="412418"/>
    <lineage>
        <taxon>Bacteria</taxon>
        <taxon>Pseudomonadati</taxon>
        <taxon>Spirochaetota</taxon>
        <taxon>Spirochaetia</taxon>
        <taxon>Spirochaetales</taxon>
        <taxon>Borreliaceae</taxon>
        <taxon>Borrelia</taxon>
    </lineage>
</organism>
<feature type="chain" id="PRO_0000384615" description="Ribosome maturation factor RimP">
    <location>
        <begin position="1"/>
        <end position="143"/>
    </location>
</feature>
<proteinExistence type="inferred from homology"/>
<name>RIMP_BORRA</name>
<evidence type="ECO:0000255" key="1">
    <source>
        <dbReference type="HAMAP-Rule" id="MF_01077"/>
    </source>
</evidence>
<keyword id="KW-0963">Cytoplasm</keyword>
<keyword id="KW-0690">Ribosome biogenesis</keyword>
<gene>
    <name evidence="1" type="primary">rimP</name>
    <name type="ordered locus">BRE_810</name>
</gene>
<protein>
    <recommendedName>
        <fullName evidence="1">Ribosome maturation factor RimP</fullName>
    </recommendedName>
</protein>
<dbReference type="EMBL" id="CP000993">
    <property type="protein sequence ID" value="ACH95021.1"/>
    <property type="molecule type" value="Genomic_DNA"/>
</dbReference>
<dbReference type="RefSeq" id="WP_012539176.1">
    <property type="nucleotide sequence ID" value="NC_011244.1"/>
</dbReference>
<dbReference type="SMR" id="B5RQD7"/>
<dbReference type="KEGG" id="bre:BRE_810"/>
<dbReference type="HOGENOM" id="CLU_070525_4_1_12"/>
<dbReference type="Proteomes" id="UP000000612">
    <property type="component" value="Chromosome"/>
</dbReference>
<dbReference type="GO" id="GO:0005829">
    <property type="term" value="C:cytosol"/>
    <property type="evidence" value="ECO:0007669"/>
    <property type="project" value="TreeGrafter"/>
</dbReference>
<dbReference type="GO" id="GO:0000028">
    <property type="term" value="P:ribosomal small subunit assembly"/>
    <property type="evidence" value="ECO:0007669"/>
    <property type="project" value="TreeGrafter"/>
</dbReference>
<dbReference type="GO" id="GO:0006412">
    <property type="term" value="P:translation"/>
    <property type="evidence" value="ECO:0007669"/>
    <property type="project" value="TreeGrafter"/>
</dbReference>
<dbReference type="HAMAP" id="MF_01077">
    <property type="entry name" value="RimP"/>
    <property type="match status" value="1"/>
</dbReference>
<dbReference type="InterPro" id="IPR003728">
    <property type="entry name" value="Ribosome_maturation_RimP"/>
</dbReference>
<dbReference type="InterPro" id="IPR036847">
    <property type="entry name" value="RimP_C_sf"/>
</dbReference>
<dbReference type="InterPro" id="IPR028989">
    <property type="entry name" value="RimP_N"/>
</dbReference>
<dbReference type="InterPro" id="IPR035956">
    <property type="entry name" value="RimP_N_sf"/>
</dbReference>
<dbReference type="NCBIfam" id="NF011223">
    <property type="entry name" value="PRK14630.1"/>
    <property type="match status" value="1"/>
</dbReference>
<dbReference type="PANTHER" id="PTHR33867">
    <property type="entry name" value="RIBOSOME MATURATION FACTOR RIMP"/>
    <property type="match status" value="1"/>
</dbReference>
<dbReference type="PANTHER" id="PTHR33867:SF1">
    <property type="entry name" value="RIBOSOME MATURATION FACTOR RIMP"/>
    <property type="match status" value="1"/>
</dbReference>
<dbReference type="Pfam" id="PF02576">
    <property type="entry name" value="RimP_N"/>
    <property type="match status" value="1"/>
</dbReference>
<dbReference type="SUPFAM" id="SSF74942">
    <property type="entry name" value="YhbC-like, C-terminal domain"/>
    <property type="match status" value="1"/>
</dbReference>
<dbReference type="SUPFAM" id="SSF75420">
    <property type="entry name" value="YhbC-like, N-terminal domain"/>
    <property type="match status" value="1"/>
</dbReference>
<comment type="function">
    <text evidence="1">Required for maturation of 30S ribosomal subunits.</text>
</comment>
<comment type="subcellular location">
    <subcellularLocation>
        <location evidence="1">Cytoplasm</location>
    </subcellularLocation>
</comment>
<comment type="similarity">
    <text evidence="1">Belongs to the RimP family.</text>
</comment>
<sequence length="143" mass="16839">MVKISDNSEIYDLIKDVTYLLGISIIEINTFRKRDEFKIQIVLYKSDNFSVDMLCDLHKMILLKLEAVLKYNVSLEISTPGINRKIKSDREFKIFEGKKIKLMLNNDFEEGFILRAERDGFIFKTEYKKVKILYSNVKKAKLS</sequence>
<accession>B5RQD7</accession>
<reference key="1">
    <citation type="journal article" date="2008" name="PLoS Genet.">
        <title>The genome of Borrelia recurrentis, the agent of deadly louse-borne relapsing fever, is a degraded subset of tick-borne Borrelia duttonii.</title>
        <authorList>
            <person name="Lescot M."/>
            <person name="Audic S."/>
            <person name="Robert C."/>
            <person name="Nguyen T.T."/>
            <person name="Blanc G."/>
            <person name="Cutler S.J."/>
            <person name="Wincker P."/>
            <person name="Couloux A."/>
            <person name="Claverie J.-M."/>
            <person name="Raoult D."/>
            <person name="Drancourt M."/>
        </authorList>
    </citation>
    <scope>NUCLEOTIDE SEQUENCE [LARGE SCALE GENOMIC DNA]</scope>
    <source>
        <strain>A1</strain>
    </source>
</reference>